<gene>
    <name evidence="1" type="primary">lysS</name>
    <name type="ordered locus">MSC_0069</name>
</gene>
<keyword id="KW-0030">Aminoacyl-tRNA synthetase</keyword>
<keyword id="KW-0067">ATP-binding</keyword>
<keyword id="KW-0963">Cytoplasm</keyword>
<keyword id="KW-0436">Ligase</keyword>
<keyword id="KW-0460">Magnesium</keyword>
<keyword id="KW-0479">Metal-binding</keyword>
<keyword id="KW-0547">Nucleotide-binding</keyword>
<keyword id="KW-0648">Protein biosynthesis</keyword>
<keyword id="KW-1185">Reference proteome</keyword>
<comment type="catalytic activity">
    <reaction evidence="1">
        <text>tRNA(Lys) + L-lysine + ATP = L-lysyl-tRNA(Lys) + AMP + diphosphate</text>
        <dbReference type="Rhea" id="RHEA:20792"/>
        <dbReference type="Rhea" id="RHEA-COMP:9696"/>
        <dbReference type="Rhea" id="RHEA-COMP:9697"/>
        <dbReference type="ChEBI" id="CHEBI:30616"/>
        <dbReference type="ChEBI" id="CHEBI:32551"/>
        <dbReference type="ChEBI" id="CHEBI:33019"/>
        <dbReference type="ChEBI" id="CHEBI:78442"/>
        <dbReference type="ChEBI" id="CHEBI:78529"/>
        <dbReference type="ChEBI" id="CHEBI:456215"/>
        <dbReference type="EC" id="6.1.1.6"/>
    </reaction>
</comment>
<comment type="cofactor">
    <cofactor evidence="1">
        <name>Mg(2+)</name>
        <dbReference type="ChEBI" id="CHEBI:18420"/>
    </cofactor>
    <text evidence="1">Binds 3 Mg(2+) ions per subunit.</text>
</comment>
<comment type="subunit">
    <text evidence="1">Homodimer.</text>
</comment>
<comment type="subcellular location">
    <subcellularLocation>
        <location evidence="1">Cytoplasm</location>
    </subcellularLocation>
</comment>
<comment type="similarity">
    <text evidence="1">Belongs to the class-II aminoacyl-tRNA synthetase family.</text>
</comment>
<sequence>MLDNRKFSEQELVRRNKYKTLVEQNKDPYKVTNWKRNTTLLKLNEKYKDYSKEDLLNLNQELVVVAGRIKLYREAGKKAAFVNIDDQDSSIQLYVRLDEIGDQSFEDFRNFDLGDIIGVKGIMMRTDHGELSIRCKEVVLLSKALRPLPDKHAGIQDIEEKYRRRYVDLIVNHDVRKTFQARTKIIRTLQNFLDNKGYMEVETPILHSLKGGASAKPFITHYNVLNTDVYLRIATELHLKRLIVGGFEGVYEIGRIFRNEGMSTRHNPEFTSIELYVAYEDMFFLMNLTEEIFRVCNAAVNSNSIIEYNNVKIDLSKPFKRLHMVDGIKQVTGVDFWKEMTVQQALELAKKHKVHVEKHQESVGHIINLFYEEFVESTIVEPTFVYGHPKEISPLAKSNPSDPRFTDRFELFILGREYANAFSELNDPIDQYERFKAQIEEESKGNDEANDMDIDFIEALEHAMPPTAGIGIGIDRLVMLLTNSESIKDVLLFPQMKPRE</sequence>
<evidence type="ECO:0000255" key="1">
    <source>
        <dbReference type="HAMAP-Rule" id="MF_00252"/>
    </source>
</evidence>
<proteinExistence type="inferred from homology"/>
<dbReference type="EC" id="6.1.1.6" evidence="1"/>
<dbReference type="EMBL" id="BX293980">
    <property type="protein sequence ID" value="CAE76722.1"/>
    <property type="molecule type" value="Genomic_DNA"/>
</dbReference>
<dbReference type="RefSeq" id="NP_975080.1">
    <property type="nucleotide sequence ID" value="NC_005364.2"/>
</dbReference>
<dbReference type="SMR" id="Q6MUG2"/>
<dbReference type="STRING" id="272632.MSC_0069"/>
<dbReference type="KEGG" id="mmy:MSC_0069"/>
<dbReference type="PATRIC" id="fig|272632.4.peg.70"/>
<dbReference type="eggNOG" id="COG1190">
    <property type="taxonomic scope" value="Bacteria"/>
</dbReference>
<dbReference type="HOGENOM" id="CLU_008255_6_0_14"/>
<dbReference type="Proteomes" id="UP000001016">
    <property type="component" value="Chromosome"/>
</dbReference>
<dbReference type="GO" id="GO:0005829">
    <property type="term" value="C:cytosol"/>
    <property type="evidence" value="ECO:0007669"/>
    <property type="project" value="TreeGrafter"/>
</dbReference>
<dbReference type="GO" id="GO:0005524">
    <property type="term" value="F:ATP binding"/>
    <property type="evidence" value="ECO:0007669"/>
    <property type="project" value="UniProtKB-UniRule"/>
</dbReference>
<dbReference type="GO" id="GO:0004824">
    <property type="term" value="F:lysine-tRNA ligase activity"/>
    <property type="evidence" value="ECO:0007669"/>
    <property type="project" value="UniProtKB-UniRule"/>
</dbReference>
<dbReference type="GO" id="GO:0000287">
    <property type="term" value="F:magnesium ion binding"/>
    <property type="evidence" value="ECO:0007669"/>
    <property type="project" value="UniProtKB-UniRule"/>
</dbReference>
<dbReference type="GO" id="GO:0000049">
    <property type="term" value="F:tRNA binding"/>
    <property type="evidence" value="ECO:0007669"/>
    <property type="project" value="TreeGrafter"/>
</dbReference>
<dbReference type="GO" id="GO:0006430">
    <property type="term" value="P:lysyl-tRNA aminoacylation"/>
    <property type="evidence" value="ECO:0007669"/>
    <property type="project" value="UniProtKB-UniRule"/>
</dbReference>
<dbReference type="CDD" id="cd00775">
    <property type="entry name" value="LysRS_core"/>
    <property type="match status" value="1"/>
</dbReference>
<dbReference type="CDD" id="cd04322">
    <property type="entry name" value="LysRS_N"/>
    <property type="match status" value="1"/>
</dbReference>
<dbReference type="FunFam" id="2.40.50.140:FF:000024">
    <property type="entry name" value="Lysine--tRNA ligase"/>
    <property type="match status" value="1"/>
</dbReference>
<dbReference type="Gene3D" id="3.30.930.10">
    <property type="entry name" value="Bira Bifunctional Protein, Domain 2"/>
    <property type="match status" value="1"/>
</dbReference>
<dbReference type="Gene3D" id="2.40.50.140">
    <property type="entry name" value="Nucleic acid-binding proteins"/>
    <property type="match status" value="1"/>
</dbReference>
<dbReference type="HAMAP" id="MF_00252">
    <property type="entry name" value="Lys_tRNA_synth_class2"/>
    <property type="match status" value="1"/>
</dbReference>
<dbReference type="InterPro" id="IPR004364">
    <property type="entry name" value="Aa-tRNA-synt_II"/>
</dbReference>
<dbReference type="InterPro" id="IPR006195">
    <property type="entry name" value="aa-tRNA-synth_II"/>
</dbReference>
<dbReference type="InterPro" id="IPR045864">
    <property type="entry name" value="aa-tRNA-synth_II/BPL/LPL"/>
</dbReference>
<dbReference type="InterPro" id="IPR002313">
    <property type="entry name" value="Lys-tRNA-ligase_II"/>
</dbReference>
<dbReference type="InterPro" id="IPR044136">
    <property type="entry name" value="Lys-tRNA-ligase_II_N"/>
</dbReference>
<dbReference type="InterPro" id="IPR018149">
    <property type="entry name" value="Lys-tRNA-synth_II_C"/>
</dbReference>
<dbReference type="InterPro" id="IPR012340">
    <property type="entry name" value="NA-bd_OB-fold"/>
</dbReference>
<dbReference type="InterPro" id="IPR004365">
    <property type="entry name" value="NA-bd_OB_tRNA"/>
</dbReference>
<dbReference type="NCBIfam" id="TIGR00499">
    <property type="entry name" value="lysS_bact"/>
    <property type="match status" value="1"/>
</dbReference>
<dbReference type="NCBIfam" id="NF001756">
    <property type="entry name" value="PRK00484.1"/>
    <property type="match status" value="1"/>
</dbReference>
<dbReference type="PANTHER" id="PTHR42918:SF15">
    <property type="entry name" value="LYSINE--TRNA LIGASE, CHLOROPLASTIC_MITOCHONDRIAL"/>
    <property type="match status" value="1"/>
</dbReference>
<dbReference type="PANTHER" id="PTHR42918">
    <property type="entry name" value="LYSYL-TRNA SYNTHETASE"/>
    <property type="match status" value="1"/>
</dbReference>
<dbReference type="Pfam" id="PF00152">
    <property type="entry name" value="tRNA-synt_2"/>
    <property type="match status" value="1"/>
</dbReference>
<dbReference type="Pfam" id="PF01336">
    <property type="entry name" value="tRNA_anti-codon"/>
    <property type="match status" value="1"/>
</dbReference>
<dbReference type="PRINTS" id="PR00982">
    <property type="entry name" value="TRNASYNTHLYS"/>
</dbReference>
<dbReference type="SUPFAM" id="SSF55681">
    <property type="entry name" value="Class II aaRS and biotin synthetases"/>
    <property type="match status" value="1"/>
</dbReference>
<dbReference type="SUPFAM" id="SSF50249">
    <property type="entry name" value="Nucleic acid-binding proteins"/>
    <property type="match status" value="1"/>
</dbReference>
<dbReference type="PROSITE" id="PS50862">
    <property type="entry name" value="AA_TRNA_LIGASE_II"/>
    <property type="match status" value="1"/>
</dbReference>
<reference key="1">
    <citation type="journal article" date="2004" name="Genome Res.">
        <title>The genome sequence of Mycoplasma mycoides subsp. mycoides SC type strain PG1T, the causative agent of contagious bovine pleuropneumonia (CBPP).</title>
        <authorList>
            <person name="Westberg J."/>
            <person name="Persson A."/>
            <person name="Holmberg A."/>
            <person name="Goesmann A."/>
            <person name="Lundeberg J."/>
            <person name="Johansson K.-E."/>
            <person name="Pettersson B."/>
            <person name="Uhlen M."/>
        </authorList>
    </citation>
    <scope>NUCLEOTIDE SEQUENCE [LARGE SCALE GENOMIC DNA]</scope>
    <source>
        <strain>CCUG 32753 / NCTC 10114 / PG1</strain>
    </source>
</reference>
<organism>
    <name type="scientific">Mycoplasma mycoides subsp. mycoides SC (strain CCUG 32753 / NCTC 10114 / PG1)</name>
    <dbReference type="NCBI Taxonomy" id="272632"/>
    <lineage>
        <taxon>Bacteria</taxon>
        <taxon>Bacillati</taxon>
        <taxon>Mycoplasmatota</taxon>
        <taxon>Mollicutes</taxon>
        <taxon>Mycoplasmataceae</taxon>
        <taxon>Mycoplasma</taxon>
    </lineage>
</organism>
<feature type="chain" id="PRO_1000012896" description="Lysine--tRNA ligase">
    <location>
        <begin position="1"/>
        <end position="500"/>
    </location>
</feature>
<feature type="binding site" evidence="1">
    <location>
        <position position="410"/>
    </location>
    <ligand>
        <name>Mg(2+)</name>
        <dbReference type="ChEBI" id="CHEBI:18420"/>
        <label>1</label>
    </ligand>
</feature>
<feature type="binding site" evidence="1">
    <location>
        <position position="417"/>
    </location>
    <ligand>
        <name>Mg(2+)</name>
        <dbReference type="ChEBI" id="CHEBI:18420"/>
        <label>1</label>
    </ligand>
</feature>
<feature type="binding site" evidence="1">
    <location>
        <position position="417"/>
    </location>
    <ligand>
        <name>Mg(2+)</name>
        <dbReference type="ChEBI" id="CHEBI:18420"/>
        <label>2</label>
    </ligand>
</feature>
<protein>
    <recommendedName>
        <fullName evidence="1">Lysine--tRNA ligase</fullName>
        <ecNumber evidence="1">6.1.1.6</ecNumber>
    </recommendedName>
    <alternativeName>
        <fullName evidence="1">Lysyl-tRNA synthetase</fullName>
        <shortName evidence="1">LysRS</shortName>
    </alternativeName>
</protein>
<name>SYK_MYCMS</name>
<accession>Q6MUG2</accession>